<evidence type="ECO:0000250" key="1">
    <source>
        <dbReference type="UniProtKB" id="Q9P0J6"/>
    </source>
</evidence>
<evidence type="ECO:0000255" key="2"/>
<evidence type="ECO:0000305" key="3"/>
<gene>
    <name type="primary">mrpl36</name>
</gene>
<comment type="subunit">
    <text evidence="1">Component of the mitochondrial ribosome large subunit (39S) which comprises a 16S rRNA and about 50 distinct proteins.</text>
</comment>
<comment type="subcellular location">
    <subcellularLocation>
        <location evidence="1">Mitochondrion</location>
    </subcellularLocation>
</comment>
<comment type="similarity">
    <text evidence="3">Belongs to the bacterial ribosomal protein bL36 family.</text>
</comment>
<feature type="transit peptide" description="Mitochondrion" evidence="2">
    <location>
        <begin position="1"/>
        <end status="unknown"/>
    </location>
</feature>
<feature type="chain" id="PRO_0000383809" description="Large ribosomal subunit protein bL36m">
    <location>
        <begin status="unknown"/>
        <end position="120"/>
    </location>
</feature>
<reference key="1">
    <citation type="submission" date="2009-03" db="EMBL/GenBank/DDBJ databases">
        <title>Osmerus mordax full-length cDNAs.</title>
        <authorList>
            <person name="von Schalburg K."/>
            <person name="Leong J."/>
            <person name="Cooper G.A."/>
            <person name="Davidson W.S."/>
            <person name="Koop B.F."/>
        </authorList>
    </citation>
    <scope>NUCLEOTIDE SEQUENCE [LARGE SCALE MRNA]</scope>
    <source>
        <tissue>Brain</tissue>
    </source>
</reference>
<dbReference type="EMBL" id="BT074832">
    <property type="protein sequence ID" value="ACO09256.1"/>
    <property type="molecule type" value="mRNA"/>
</dbReference>
<dbReference type="SMR" id="C1BJQ3"/>
<dbReference type="GO" id="GO:0005762">
    <property type="term" value="C:mitochondrial large ribosomal subunit"/>
    <property type="evidence" value="ECO:0000250"/>
    <property type="project" value="UniProtKB"/>
</dbReference>
<dbReference type="GO" id="GO:0003735">
    <property type="term" value="F:structural constituent of ribosome"/>
    <property type="evidence" value="ECO:0007669"/>
    <property type="project" value="InterPro"/>
</dbReference>
<dbReference type="GO" id="GO:0006412">
    <property type="term" value="P:translation"/>
    <property type="evidence" value="ECO:0007669"/>
    <property type="project" value="InterPro"/>
</dbReference>
<dbReference type="HAMAP" id="MF_00251">
    <property type="entry name" value="Ribosomal_bL36"/>
    <property type="match status" value="1"/>
</dbReference>
<dbReference type="InterPro" id="IPR052143">
    <property type="entry name" value="Mitoribosomal_bL36m"/>
</dbReference>
<dbReference type="InterPro" id="IPR000473">
    <property type="entry name" value="Ribosomal_bL36"/>
</dbReference>
<dbReference type="InterPro" id="IPR035977">
    <property type="entry name" value="Ribosomal_bL36_sp"/>
</dbReference>
<dbReference type="NCBIfam" id="TIGR01022">
    <property type="entry name" value="rpmJ_bact"/>
    <property type="match status" value="1"/>
</dbReference>
<dbReference type="PANTHER" id="PTHR46909">
    <property type="entry name" value="39S RIBOSOMAL PROTEIN L36, MITOCHONDRIAL"/>
    <property type="match status" value="1"/>
</dbReference>
<dbReference type="PANTHER" id="PTHR46909:SF1">
    <property type="entry name" value="LARGE RIBOSOMAL SUBUNIT PROTEIN BL36M"/>
    <property type="match status" value="1"/>
</dbReference>
<dbReference type="Pfam" id="PF00444">
    <property type="entry name" value="Ribosomal_L36"/>
    <property type="match status" value="1"/>
</dbReference>
<dbReference type="SUPFAM" id="SSF57840">
    <property type="entry name" value="Ribosomal protein L36"/>
    <property type="match status" value="1"/>
</dbReference>
<dbReference type="PROSITE" id="PS00828">
    <property type="entry name" value="RIBOSOMAL_L36"/>
    <property type="match status" value="1"/>
</dbReference>
<accession>C1BJQ3</accession>
<proteinExistence type="evidence at transcript level"/>
<protein>
    <recommendedName>
        <fullName evidence="3">Large ribosomal subunit protein bL36m</fullName>
    </recommendedName>
    <alternativeName>
        <fullName>39S ribosomal protein L36, mitochondrial</fullName>
        <shortName>L36mt</shortName>
        <shortName>MRP-L36</shortName>
    </alternativeName>
</protein>
<keyword id="KW-0496">Mitochondrion</keyword>
<keyword id="KW-0687">Ribonucleoprotein</keyword>
<keyword id="KW-0689">Ribosomal protein</keyword>
<keyword id="KW-0809">Transit peptide</keyword>
<organism>
    <name type="scientific">Osmerus mordax</name>
    <name type="common">Rainbow smelt</name>
    <name type="synonym">Atherina mordax</name>
    <dbReference type="NCBI Taxonomy" id="8014"/>
    <lineage>
        <taxon>Eukaryota</taxon>
        <taxon>Metazoa</taxon>
        <taxon>Chordata</taxon>
        <taxon>Craniata</taxon>
        <taxon>Vertebrata</taxon>
        <taxon>Euteleostomi</taxon>
        <taxon>Actinopterygii</taxon>
        <taxon>Neopterygii</taxon>
        <taxon>Teleostei</taxon>
        <taxon>Stomiati</taxon>
        <taxon>Osmeriformes</taxon>
        <taxon>Osmeridae</taxon>
        <taxon>Osmerus</taxon>
    </lineage>
</organism>
<sequence>MLTHLARTLSRQLTGLGRSSLCWFPHPGFLYRGLSALSVTPRLLVPGRAPSLQAPAPATFPQDRGSLLGQCQHLACLQPCAGMKTKSSLKRRCKNCFYVRRRGRLFVFCKTHPRHKQRQG</sequence>
<name>RM36_OSMMO</name>